<comment type="function">
    <text evidence="1">eIF-2 functions in the early steps of protein synthesis by forming a ternary complex with GTP and initiator tRNA.</text>
</comment>
<comment type="subunit">
    <text evidence="1">Heterotrimer composed of an alpha, a beta and a gamma chain.</text>
</comment>
<comment type="similarity">
    <text evidence="1">Belongs to the eIF-2-beta/eIF-5 family.</text>
</comment>
<organism>
    <name type="scientific">Haloarcula marismortui (strain ATCC 43049 / DSM 3752 / JCM 8966 / VKM B-1809)</name>
    <name type="common">Halobacterium marismortui</name>
    <dbReference type="NCBI Taxonomy" id="272569"/>
    <lineage>
        <taxon>Archaea</taxon>
        <taxon>Methanobacteriati</taxon>
        <taxon>Methanobacteriota</taxon>
        <taxon>Stenosarchaea group</taxon>
        <taxon>Halobacteria</taxon>
        <taxon>Halobacteriales</taxon>
        <taxon>Haloarculaceae</taxon>
        <taxon>Haloarcula</taxon>
    </lineage>
</organism>
<accession>Q5V323</accession>
<evidence type="ECO:0000255" key="1">
    <source>
        <dbReference type="HAMAP-Rule" id="MF_00232"/>
    </source>
</evidence>
<evidence type="ECO:0000256" key="2">
    <source>
        <dbReference type="SAM" id="MobiDB-lite"/>
    </source>
</evidence>
<proteinExistence type="inferred from homology"/>
<sequence length="134" mass="15106">MEYDDMLDRAMEETPEIDGTSERFEVPDPDIRQEGNVTVYENFQSTCSRLGREDDHVMKFLQNDLGTSGHIDESGRVRLTGEFDATRIEASIDEYVDEFVLCSECGLPDTQLEREQGALLLRCEACGARSATSE</sequence>
<name>IF2B_HALMA</name>
<reference key="1">
    <citation type="journal article" date="2004" name="Genome Res.">
        <title>Genome sequence of Haloarcula marismortui: a halophilic archaeon from the Dead Sea.</title>
        <authorList>
            <person name="Baliga N.S."/>
            <person name="Bonneau R."/>
            <person name="Facciotti M.T."/>
            <person name="Pan M."/>
            <person name="Glusman G."/>
            <person name="Deutsch E.W."/>
            <person name="Shannon P."/>
            <person name="Chiu Y."/>
            <person name="Weng R.S."/>
            <person name="Gan R.R."/>
            <person name="Hung P."/>
            <person name="Date S.V."/>
            <person name="Marcotte E."/>
            <person name="Hood L."/>
            <person name="Ng W.V."/>
        </authorList>
    </citation>
    <scope>NUCLEOTIDE SEQUENCE [LARGE SCALE GENOMIC DNA]</scope>
    <source>
        <strain>ATCC 43049 / DSM 3752 / JCM 8966 / VKM B-1809</strain>
    </source>
</reference>
<feature type="chain" id="PRO_0000137418" description="Translation initiation factor 2 subunit beta">
    <location>
        <begin position="1"/>
        <end position="134"/>
    </location>
</feature>
<feature type="region of interest" description="Disordered" evidence="2">
    <location>
        <begin position="1"/>
        <end position="28"/>
    </location>
</feature>
<feature type="compositionally biased region" description="Basic and acidic residues" evidence="2">
    <location>
        <begin position="1"/>
        <end position="12"/>
    </location>
</feature>
<gene>
    <name evidence="1" type="primary">eif2b</name>
    <name type="ordered locus">rrnAC1124</name>
</gene>
<keyword id="KW-0396">Initiation factor</keyword>
<keyword id="KW-0648">Protein biosynthesis</keyword>
<keyword id="KW-1185">Reference proteome</keyword>
<dbReference type="EMBL" id="AY596297">
    <property type="protein sequence ID" value="AAV46079.1"/>
    <property type="molecule type" value="Genomic_DNA"/>
</dbReference>
<dbReference type="RefSeq" id="WP_011223454.1">
    <property type="nucleotide sequence ID" value="NC_006396.1"/>
</dbReference>
<dbReference type="SMR" id="Q5V323"/>
<dbReference type="STRING" id="272569.rrnAC1124"/>
<dbReference type="PaxDb" id="272569-rrnAC1124"/>
<dbReference type="EnsemblBacteria" id="AAV46079">
    <property type="protein sequence ID" value="AAV46079"/>
    <property type="gene ID" value="rrnAC1124"/>
</dbReference>
<dbReference type="GeneID" id="40152126"/>
<dbReference type="KEGG" id="hma:rrnAC1124"/>
<dbReference type="PATRIC" id="fig|272569.17.peg.1845"/>
<dbReference type="eggNOG" id="arCOG01640">
    <property type="taxonomic scope" value="Archaea"/>
</dbReference>
<dbReference type="HOGENOM" id="CLU_026663_3_1_2"/>
<dbReference type="Proteomes" id="UP000001169">
    <property type="component" value="Chromosome I"/>
</dbReference>
<dbReference type="GO" id="GO:0003743">
    <property type="term" value="F:translation initiation factor activity"/>
    <property type="evidence" value="ECO:0007669"/>
    <property type="project" value="UniProtKB-UniRule"/>
</dbReference>
<dbReference type="Gene3D" id="3.30.30.170">
    <property type="match status" value="1"/>
</dbReference>
<dbReference type="HAMAP" id="MF_00232">
    <property type="entry name" value="eIF_2_beta"/>
    <property type="match status" value="1"/>
</dbReference>
<dbReference type="InterPro" id="IPR045196">
    <property type="entry name" value="IF2/IF5"/>
</dbReference>
<dbReference type="InterPro" id="IPR004458">
    <property type="entry name" value="TIF2_bsu_arc"/>
</dbReference>
<dbReference type="InterPro" id="IPR002735">
    <property type="entry name" value="Transl_init_fac_IF2/IF5_dom"/>
</dbReference>
<dbReference type="InterPro" id="IPR016189">
    <property type="entry name" value="Transl_init_fac_IF2/IF5_N"/>
</dbReference>
<dbReference type="InterPro" id="IPR016190">
    <property type="entry name" value="Transl_init_fac_IF2/IF5_Zn-bd"/>
</dbReference>
<dbReference type="NCBIfam" id="NF003067">
    <property type="entry name" value="PRK03988.1"/>
    <property type="match status" value="1"/>
</dbReference>
<dbReference type="PANTHER" id="PTHR23001">
    <property type="entry name" value="EUKARYOTIC TRANSLATION INITIATION FACTOR"/>
    <property type="match status" value="1"/>
</dbReference>
<dbReference type="PANTHER" id="PTHR23001:SF3">
    <property type="entry name" value="EUKARYOTIC TRANSLATION INITIATION FACTOR 2 SUBUNIT 2"/>
    <property type="match status" value="1"/>
</dbReference>
<dbReference type="Pfam" id="PF01873">
    <property type="entry name" value="eIF-5_eIF-2B"/>
    <property type="match status" value="1"/>
</dbReference>
<dbReference type="SMART" id="SM00653">
    <property type="entry name" value="eIF2B_5"/>
    <property type="match status" value="1"/>
</dbReference>
<dbReference type="SUPFAM" id="SSF100966">
    <property type="entry name" value="Translation initiation factor 2 beta, aIF2beta, N-terminal domain"/>
    <property type="match status" value="1"/>
</dbReference>
<dbReference type="SUPFAM" id="SSF75689">
    <property type="entry name" value="Zinc-binding domain of translation initiation factor 2 beta"/>
    <property type="match status" value="1"/>
</dbReference>
<protein>
    <recommendedName>
        <fullName evidence="1">Translation initiation factor 2 subunit beta</fullName>
    </recommendedName>
    <alternativeName>
        <fullName evidence="1">aIF2-beta</fullName>
    </alternativeName>
    <alternativeName>
        <fullName evidence="1">eIF-2-beta</fullName>
    </alternativeName>
</protein>